<evidence type="ECO:0000255" key="1">
    <source>
        <dbReference type="HAMAP-Rule" id="MF_00382"/>
    </source>
</evidence>
<evidence type="ECO:0000305" key="2"/>
<dbReference type="EMBL" id="CP001357">
    <property type="protein sequence ID" value="ACN83218.1"/>
    <property type="molecule type" value="Genomic_DNA"/>
</dbReference>
<dbReference type="RefSeq" id="WP_012670268.1">
    <property type="nucleotide sequence ID" value="NC_012225.1"/>
</dbReference>
<dbReference type="SMR" id="C0QZD0"/>
<dbReference type="STRING" id="565034.BHWA1_00724"/>
<dbReference type="GeneID" id="63961836"/>
<dbReference type="KEGG" id="bhy:BHWA1_00724"/>
<dbReference type="eggNOG" id="COG0292">
    <property type="taxonomic scope" value="Bacteria"/>
</dbReference>
<dbReference type="HOGENOM" id="CLU_123265_0_1_12"/>
<dbReference type="Proteomes" id="UP000001803">
    <property type="component" value="Chromosome"/>
</dbReference>
<dbReference type="GO" id="GO:1990904">
    <property type="term" value="C:ribonucleoprotein complex"/>
    <property type="evidence" value="ECO:0007669"/>
    <property type="project" value="UniProtKB-KW"/>
</dbReference>
<dbReference type="GO" id="GO:0005840">
    <property type="term" value="C:ribosome"/>
    <property type="evidence" value="ECO:0007669"/>
    <property type="project" value="UniProtKB-KW"/>
</dbReference>
<dbReference type="GO" id="GO:0019843">
    <property type="term" value="F:rRNA binding"/>
    <property type="evidence" value="ECO:0007669"/>
    <property type="project" value="UniProtKB-UniRule"/>
</dbReference>
<dbReference type="GO" id="GO:0003735">
    <property type="term" value="F:structural constituent of ribosome"/>
    <property type="evidence" value="ECO:0007669"/>
    <property type="project" value="InterPro"/>
</dbReference>
<dbReference type="GO" id="GO:0000027">
    <property type="term" value="P:ribosomal large subunit assembly"/>
    <property type="evidence" value="ECO:0007669"/>
    <property type="project" value="UniProtKB-UniRule"/>
</dbReference>
<dbReference type="GO" id="GO:0006412">
    <property type="term" value="P:translation"/>
    <property type="evidence" value="ECO:0007669"/>
    <property type="project" value="InterPro"/>
</dbReference>
<dbReference type="CDD" id="cd07026">
    <property type="entry name" value="Ribosomal_L20"/>
    <property type="match status" value="1"/>
</dbReference>
<dbReference type="FunFam" id="1.10.1900.20:FF:000001">
    <property type="entry name" value="50S ribosomal protein L20"/>
    <property type="match status" value="1"/>
</dbReference>
<dbReference type="Gene3D" id="6.10.160.10">
    <property type="match status" value="1"/>
</dbReference>
<dbReference type="Gene3D" id="1.10.1900.20">
    <property type="entry name" value="Ribosomal protein L20"/>
    <property type="match status" value="1"/>
</dbReference>
<dbReference type="HAMAP" id="MF_00382">
    <property type="entry name" value="Ribosomal_bL20"/>
    <property type="match status" value="1"/>
</dbReference>
<dbReference type="InterPro" id="IPR005813">
    <property type="entry name" value="Ribosomal_bL20"/>
</dbReference>
<dbReference type="InterPro" id="IPR035566">
    <property type="entry name" value="Ribosomal_protein_bL20_C"/>
</dbReference>
<dbReference type="NCBIfam" id="TIGR01032">
    <property type="entry name" value="rplT_bact"/>
    <property type="match status" value="1"/>
</dbReference>
<dbReference type="PANTHER" id="PTHR10986">
    <property type="entry name" value="39S RIBOSOMAL PROTEIN L20"/>
    <property type="match status" value="1"/>
</dbReference>
<dbReference type="Pfam" id="PF00453">
    <property type="entry name" value="Ribosomal_L20"/>
    <property type="match status" value="1"/>
</dbReference>
<dbReference type="PRINTS" id="PR00062">
    <property type="entry name" value="RIBOSOMALL20"/>
</dbReference>
<dbReference type="SUPFAM" id="SSF74731">
    <property type="entry name" value="Ribosomal protein L20"/>
    <property type="match status" value="1"/>
</dbReference>
<sequence>MRAVSGVVRKKKVKKILNMAKGYYGSHSKQMKQAKEAVIRGLKYAYRDRRQKKRMMRRLWTLRINAACRPLGISYSKFINGLKKANVIIDRKALSNLAIDDYKAFEAVVEVAKKALA</sequence>
<protein>
    <recommendedName>
        <fullName evidence="1">Large ribosomal subunit protein bL20</fullName>
    </recommendedName>
    <alternativeName>
        <fullName evidence="2">50S ribosomal protein L20</fullName>
    </alternativeName>
</protein>
<reference key="1">
    <citation type="journal article" date="2009" name="PLoS ONE">
        <title>Genome sequence of the pathogenic intestinal spirochete Brachyspira hyodysenteriae reveals adaptations to its lifestyle in the porcine large intestine.</title>
        <authorList>
            <person name="Bellgard M.I."/>
            <person name="Wanchanthuek P."/>
            <person name="La T."/>
            <person name="Ryan K."/>
            <person name="Moolhuijzen P."/>
            <person name="Albertyn Z."/>
            <person name="Shaban B."/>
            <person name="Motro Y."/>
            <person name="Dunn D.S."/>
            <person name="Schibeci D."/>
            <person name="Hunter A."/>
            <person name="Barrero R."/>
            <person name="Phillips N.D."/>
            <person name="Hampson D.J."/>
        </authorList>
    </citation>
    <scope>NUCLEOTIDE SEQUENCE [LARGE SCALE GENOMIC DNA]</scope>
    <source>
        <strain>ATCC 49526 / WA1</strain>
    </source>
</reference>
<keyword id="KW-0687">Ribonucleoprotein</keyword>
<keyword id="KW-0689">Ribosomal protein</keyword>
<keyword id="KW-0694">RNA-binding</keyword>
<keyword id="KW-0699">rRNA-binding</keyword>
<name>RL20_BRAHW</name>
<organism>
    <name type="scientific">Brachyspira hyodysenteriae (strain ATCC 49526 / WA1)</name>
    <dbReference type="NCBI Taxonomy" id="565034"/>
    <lineage>
        <taxon>Bacteria</taxon>
        <taxon>Pseudomonadati</taxon>
        <taxon>Spirochaetota</taxon>
        <taxon>Spirochaetia</taxon>
        <taxon>Brachyspirales</taxon>
        <taxon>Brachyspiraceae</taxon>
        <taxon>Brachyspira</taxon>
    </lineage>
</organism>
<comment type="function">
    <text evidence="1">Binds directly to 23S ribosomal RNA and is necessary for the in vitro assembly process of the 50S ribosomal subunit. It is not involved in the protein synthesizing functions of that subunit.</text>
</comment>
<comment type="similarity">
    <text evidence="1">Belongs to the bacterial ribosomal protein bL20 family.</text>
</comment>
<feature type="chain" id="PRO_1000205703" description="Large ribosomal subunit protein bL20">
    <location>
        <begin position="1"/>
        <end position="117"/>
    </location>
</feature>
<proteinExistence type="inferred from homology"/>
<gene>
    <name evidence="1" type="primary">rplT</name>
    <name type="ordered locus">BHWA1_00724</name>
</gene>
<accession>C0QZD0</accession>